<reference key="1">
    <citation type="journal article" date="2006" name="Proc. Natl. Acad. Sci. U.S.A.">
        <title>Highly conserved syntenic blocks at the vertebrate Hox loci and conserved regulatory elements within and outside Hox gene clusters.</title>
        <authorList>
            <person name="Lee A.P."/>
            <person name="Koh E.G.L."/>
            <person name="Tay A."/>
            <person name="Brenner S."/>
            <person name="Venkatesh B."/>
        </authorList>
    </citation>
    <scope>NUCLEOTIDE SEQUENCE [GENOMIC DNA]</scope>
</reference>
<accession>Q1KL16</accession>
<gene>
    <name type="primary">hoxa10a</name>
</gene>
<feature type="chain" id="PRO_0000265969" description="Homeobox protein Hox-A10a">
    <location>
        <begin position="1"/>
        <end position="287"/>
    </location>
</feature>
<feature type="DNA-binding region" description="Homeobox" evidence="2">
    <location>
        <begin position="213"/>
        <end position="272"/>
    </location>
</feature>
<feature type="region of interest" description="Disordered" evidence="3">
    <location>
        <begin position="70"/>
        <end position="210"/>
    </location>
</feature>
<feature type="compositionally biased region" description="Polar residues" evidence="3">
    <location>
        <begin position="93"/>
        <end position="109"/>
    </location>
</feature>
<feature type="compositionally biased region" description="Polar residues" evidence="3">
    <location>
        <begin position="149"/>
        <end position="158"/>
    </location>
</feature>
<comment type="function">
    <text evidence="1">Sequence-specific transcription factor which is part of a developmental regulatory system that provides cells with specific positional identities on the anterior-posterior axis.</text>
</comment>
<comment type="subcellular location">
    <subcellularLocation>
        <location evidence="2">Nucleus</location>
    </subcellularLocation>
</comment>
<comment type="similarity">
    <text evidence="4">Belongs to the Abd-B homeobox family.</text>
</comment>
<evidence type="ECO:0000250" key="1"/>
<evidence type="ECO:0000255" key="2">
    <source>
        <dbReference type="PROSITE-ProRule" id="PRU00108"/>
    </source>
</evidence>
<evidence type="ECO:0000256" key="3">
    <source>
        <dbReference type="SAM" id="MobiDB-lite"/>
    </source>
</evidence>
<evidence type="ECO:0000305" key="4"/>
<dbReference type="EMBL" id="DQ481663">
    <property type="protein sequence ID" value="ABF22378.1"/>
    <property type="molecule type" value="Genomic_DNA"/>
</dbReference>
<dbReference type="SMR" id="Q1KL16"/>
<dbReference type="STRING" id="31033.ENSTRUP00000040855"/>
<dbReference type="eggNOG" id="KOG0487">
    <property type="taxonomic scope" value="Eukaryota"/>
</dbReference>
<dbReference type="HOGENOM" id="CLU_472474_0_0_1"/>
<dbReference type="InParanoid" id="Q1KL16"/>
<dbReference type="Proteomes" id="UP000005226">
    <property type="component" value="Unplaced"/>
</dbReference>
<dbReference type="GO" id="GO:0005634">
    <property type="term" value="C:nucleus"/>
    <property type="evidence" value="ECO:0007669"/>
    <property type="project" value="UniProtKB-SubCell"/>
</dbReference>
<dbReference type="GO" id="GO:0000981">
    <property type="term" value="F:DNA-binding transcription factor activity, RNA polymerase II-specific"/>
    <property type="evidence" value="ECO:0007669"/>
    <property type="project" value="InterPro"/>
</dbReference>
<dbReference type="GO" id="GO:0000978">
    <property type="term" value="F:RNA polymerase II cis-regulatory region sequence-specific DNA binding"/>
    <property type="evidence" value="ECO:0007669"/>
    <property type="project" value="TreeGrafter"/>
</dbReference>
<dbReference type="CDD" id="cd00086">
    <property type="entry name" value="homeodomain"/>
    <property type="match status" value="1"/>
</dbReference>
<dbReference type="FunFam" id="1.10.10.60:FF:000018">
    <property type="entry name" value="Homeobox A10"/>
    <property type="match status" value="1"/>
</dbReference>
<dbReference type="Gene3D" id="1.10.10.60">
    <property type="entry name" value="Homeodomain-like"/>
    <property type="match status" value="1"/>
</dbReference>
<dbReference type="InterPro" id="IPR001356">
    <property type="entry name" value="HD"/>
</dbReference>
<dbReference type="InterPro" id="IPR020479">
    <property type="entry name" value="HD_metazoa"/>
</dbReference>
<dbReference type="InterPro" id="IPR017970">
    <property type="entry name" value="Homeobox_CS"/>
</dbReference>
<dbReference type="InterPro" id="IPR009057">
    <property type="entry name" value="Homeodomain-like_sf"/>
</dbReference>
<dbReference type="InterPro" id="IPR046333">
    <property type="entry name" value="HXA10/ABDB-like"/>
</dbReference>
<dbReference type="PANTHER" id="PTHR45874">
    <property type="entry name" value="HOMEOBOX PROTEIN ABDOMINAL-B"/>
    <property type="match status" value="1"/>
</dbReference>
<dbReference type="PANTHER" id="PTHR45874:SF1">
    <property type="entry name" value="HOMEOBOX PROTEIN HOX-A10"/>
    <property type="match status" value="1"/>
</dbReference>
<dbReference type="Pfam" id="PF00046">
    <property type="entry name" value="Homeodomain"/>
    <property type="match status" value="1"/>
</dbReference>
<dbReference type="PRINTS" id="PR00024">
    <property type="entry name" value="HOMEOBOX"/>
</dbReference>
<dbReference type="SMART" id="SM00389">
    <property type="entry name" value="HOX"/>
    <property type="match status" value="1"/>
</dbReference>
<dbReference type="SUPFAM" id="SSF46689">
    <property type="entry name" value="Homeodomain-like"/>
    <property type="match status" value="1"/>
</dbReference>
<dbReference type="PROSITE" id="PS00027">
    <property type="entry name" value="HOMEOBOX_1"/>
    <property type="match status" value="1"/>
</dbReference>
<dbReference type="PROSITE" id="PS50071">
    <property type="entry name" value="HOMEOBOX_2"/>
    <property type="match status" value="1"/>
</dbReference>
<keyword id="KW-0217">Developmental protein</keyword>
<keyword id="KW-0238">DNA-binding</keyword>
<keyword id="KW-0371">Homeobox</keyword>
<keyword id="KW-0539">Nucleus</keyword>
<keyword id="KW-1185">Reference proteome</keyword>
<keyword id="KW-0804">Transcription</keyword>
<keyword id="KW-0805">Transcription regulation</keyword>
<sequence>MSSMEMWMDTQRSCRMDQEHPVGSQVAPCSFTQNIKEESTYCLYEQPKCPKASTTEDLAYSRLTSASLGSTSCTVTNGGSDGGSVPVPGYFRLSQTHAHSHKLYNTNGPQPNPSPSRFGLHPAAPARFHTQTNSTPALAAAQERRTTDDTGTSGNADQQPGHAAPVAEEVRECSEAEGSSADEAEENEDRAATGTKGHSKPDNAGNWLTAKSGRKKRCPYTKHQTLELEKEFLFNMYLTRERRLEISKSVHLTDRQVKIWFQNRRMKLKKMTRENRIRELTSNYGFS</sequence>
<protein>
    <recommendedName>
        <fullName>Homeobox protein Hox-A10a</fullName>
    </recommendedName>
</protein>
<name>HXAAA_TAKRU</name>
<organism>
    <name type="scientific">Takifugu rubripes</name>
    <name type="common">Japanese pufferfish</name>
    <name type="synonym">Fugu rubripes</name>
    <dbReference type="NCBI Taxonomy" id="31033"/>
    <lineage>
        <taxon>Eukaryota</taxon>
        <taxon>Metazoa</taxon>
        <taxon>Chordata</taxon>
        <taxon>Craniata</taxon>
        <taxon>Vertebrata</taxon>
        <taxon>Euteleostomi</taxon>
        <taxon>Actinopterygii</taxon>
        <taxon>Neopterygii</taxon>
        <taxon>Teleostei</taxon>
        <taxon>Neoteleostei</taxon>
        <taxon>Acanthomorphata</taxon>
        <taxon>Eupercaria</taxon>
        <taxon>Tetraodontiformes</taxon>
        <taxon>Tetradontoidea</taxon>
        <taxon>Tetraodontidae</taxon>
        <taxon>Takifugu</taxon>
    </lineage>
</organism>
<proteinExistence type="inferred from homology"/>